<comment type="function">
    <text evidence="1">Lipase which is essential for lysis of subvacuolar cytoplasm to vacuole targeted bodies and intravacuolar autophagic bodies. Involved in the lysis of intravacuolar multivesicular body (MVB) vesicles. The intravacuolar membrane disintegration by ATG15 is critical to life span extension (By similarity).</text>
</comment>
<comment type="catalytic activity">
    <reaction>
        <text>a triacylglycerol + H2O = a diacylglycerol + a fatty acid + H(+)</text>
        <dbReference type="Rhea" id="RHEA:12044"/>
        <dbReference type="ChEBI" id="CHEBI:15377"/>
        <dbReference type="ChEBI" id="CHEBI:15378"/>
        <dbReference type="ChEBI" id="CHEBI:17855"/>
        <dbReference type="ChEBI" id="CHEBI:18035"/>
        <dbReference type="ChEBI" id="CHEBI:28868"/>
        <dbReference type="EC" id="3.1.1.3"/>
    </reaction>
</comment>
<comment type="subunit">
    <text evidence="1">Binds to both phosphatidylinositol (PI) and phosphatidylinositol 3,5-bisphosphate (PIP2).</text>
</comment>
<comment type="subcellular location">
    <subcellularLocation>
        <location evidence="2">Endosome</location>
        <location evidence="2">Multivesicular body membrane</location>
        <topology evidence="2">Single-pass type II membrane protein</topology>
    </subcellularLocation>
    <subcellularLocation>
        <location evidence="2">Prevacuolar compartment membrane</location>
        <topology evidence="2">Single-pass type II membrane protein</topology>
    </subcellularLocation>
    <text evidence="2">From ER, targeted to vacuolar lumen at the MVB vesicles via the Golgi and the prevacuolar compartment (PVC).</text>
</comment>
<comment type="similarity">
    <text evidence="6">Belongs to the AB hydrolase superfamily. Lipase family.</text>
</comment>
<protein>
    <recommendedName>
        <fullName>Putative lipase ATG15</fullName>
        <ecNumber>3.1.1.3</ecNumber>
    </recommendedName>
    <alternativeName>
        <fullName>Autophagy-related protein 15</fullName>
    </alternativeName>
</protein>
<sequence>MGSKHKKNASKSLRAFSFIILSASIALVYIFNPVKLIFPSSIIRFHHGLPPQSQEIVTEQPKSHSKFQLKHIYHHGSGKNYKIHRRLDITPEYLAKHDAYFQHFNQLQSGTEQVSLDNLDSVVAQYDWPKHHQGKNPWTIELPMKIAKRPAVRLKQRHDHNYIDSYLQYALSVKSNPQHINNVQLEWISEDISVPDVKDRDTVVSLATISSNAYVRFPKDDDEKKNSDWIDVGEPWVPDDRNNNIEFGWGDDGLRGHIFVSEDNKTVVIGVKGTSGAGLPGSGSEETQANDKTNDNLLFSCCCARISYMWTTVCDCYEKTYTCNQDCLEKELVRKDRYYQAVLDLYRNVTEIYPSESHDIWVTGHSLGGALASLLGRTYGLPVVAYEAPGEMLATQRLHLPQPPGLPKHAENIWHFGNTADPIFMGVCNGASSSCNLAGYALETACHTGRQCVYDVVTDKGWHVNLLNHRIHTVIDDIIMTYNDTAPCADQPPCRDCFNWRFTSRDDSLDDEPPLPNPLRPGKPSTTSSSQHHTSTTTTTETSRPQKCLKRTWYGWCVEWGDEEDA</sequence>
<keyword id="KW-0072">Autophagy</keyword>
<keyword id="KW-0967">Endosome</keyword>
<keyword id="KW-0325">Glycoprotein</keyword>
<keyword id="KW-0378">Hydrolase</keyword>
<keyword id="KW-0442">Lipid degradation</keyword>
<keyword id="KW-0443">Lipid metabolism</keyword>
<keyword id="KW-0472">Membrane</keyword>
<keyword id="KW-1185">Reference proteome</keyword>
<keyword id="KW-0735">Signal-anchor</keyword>
<keyword id="KW-0812">Transmembrane</keyword>
<keyword id="KW-1133">Transmembrane helix</keyword>
<proteinExistence type="inferred from homology"/>
<feature type="chain" id="PRO_0000317970" description="Putative lipase ATG15">
    <location>
        <begin position="1"/>
        <end position="566"/>
    </location>
</feature>
<feature type="topological domain" description="Cytoplasmic" evidence="1">
    <location>
        <begin position="1"/>
        <end position="17"/>
    </location>
</feature>
<feature type="transmembrane region" description="Helical; Signal-anchor for type II membrane protein">
    <location>
        <begin position="18"/>
        <end position="38"/>
    </location>
</feature>
<feature type="topological domain" description="Lumenal" evidence="1">
    <location>
        <begin position="39"/>
        <end position="566"/>
    </location>
</feature>
<feature type="region of interest" description="Disordered" evidence="5">
    <location>
        <begin position="507"/>
        <end position="545"/>
    </location>
</feature>
<feature type="compositionally biased region" description="Low complexity" evidence="5">
    <location>
        <begin position="522"/>
        <end position="543"/>
    </location>
</feature>
<feature type="active site" description="Charge relay system" evidence="4">
    <location>
        <position position="366"/>
    </location>
</feature>
<feature type="glycosylation site" description="N-linked (GlcNAc...) asparagine" evidence="3">
    <location>
        <position position="264"/>
    </location>
</feature>
<feature type="glycosylation site" description="N-linked (GlcNAc...) asparagine" evidence="3">
    <location>
        <position position="348"/>
    </location>
</feature>
<feature type="glycosylation site" description="N-linked (GlcNAc...) asparagine" evidence="3">
    <location>
        <position position="483"/>
    </location>
</feature>
<accession>A5DC90</accession>
<reference key="1">
    <citation type="journal article" date="2009" name="Nature">
        <title>Evolution of pathogenicity and sexual reproduction in eight Candida genomes.</title>
        <authorList>
            <person name="Butler G."/>
            <person name="Rasmussen M.D."/>
            <person name="Lin M.F."/>
            <person name="Santos M.A.S."/>
            <person name="Sakthikumar S."/>
            <person name="Munro C.A."/>
            <person name="Rheinbay E."/>
            <person name="Grabherr M."/>
            <person name="Forche A."/>
            <person name="Reedy J.L."/>
            <person name="Agrafioti I."/>
            <person name="Arnaud M.B."/>
            <person name="Bates S."/>
            <person name="Brown A.J.P."/>
            <person name="Brunke S."/>
            <person name="Costanzo M.C."/>
            <person name="Fitzpatrick D.A."/>
            <person name="de Groot P.W.J."/>
            <person name="Harris D."/>
            <person name="Hoyer L.L."/>
            <person name="Hube B."/>
            <person name="Klis F.M."/>
            <person name="Kodira C."/>
            <person name="Lennard N."/>
            <person name="Logue M.E."/>
            <person name="Martin R."/>
            <person name="Neiman A.M."/>
            <person name="Nikolaou E."/>
            <person name="Quail M.A."/>
            <person name="Quinn J."/>
            <person name="Santos M.C."/>
            <person name="Schmitzberger F.F."/>
            <person name="Sherlock G."/>
            <person name="Shah P."/>
            <person name="Silverstein K.A.T."/>
            <person name="Skrzypek M.S."/>
            <person name="Soll D."/>
            <person name="Staggs R."/>
            <person name="Stansfield I."/>
            <person name="Stumpf M.P.H."/>
            <person name="Sudbery P.E."/>
            <person name="Srikantha T."/>
            <person name="Zeng Q."/>
            <person name="Berman J."/>
            <person name="Berriman M."/>
            <person name="Heitman J."/>
            <person name="Gow N.A.R."/>
            <person name="Lorenz M.C."/>
            <person name="Birren B.W."/>
            <person name="Kellis M."/>
            <person name="Cuomo C.A."/>
        </authorList>
    </citation>
    <scope>NUCLEOTIDE SEQUENCE [LARGE SCALE GENOMIC DNA]</scope>
    <source>
        <strain>ATCC 6260 / CBS 566 / DSM 6381 / JCM 1539 / NBRC 10279 / NRRL Y-324</strain>
    </source>
</reference>
<organism>
    <name type="scientific">Meyerozyma guilliermondii (strain ATCC 6260 / CBS 566 / DSM 6381 / JCM 1539 / NBRC 10279 / NRRL Y-324)</name>
    <name type="common">Yeast</name>
    <name type="synonym">Candida guilliermondii</name>
    <dbReference type="NCBI Taxonomy" id="294746"/>
    <lineage>
        <taxon>Eukaryota</taxon>
        <taxon>Fungi</taxon>
        <taxon>Dikarya</taxon>
        <taxon>Ascomycota</taxon>
        <taxon>Saccharomycotina</taxon>
        <taxon>Pichiomycetes</taxon>
        <taxon>Debaryomycetaceae</taxon>
        <taxon>Meyerozyma</taxon>
    </lineage>
</organism>
<gene>
    <name type="primary">ATG15</name>
    <name type="ORF">PGUG_00895</name>
</gene>
<dbReference type="EC" id="3.1.1.3"/>
<dbReference type="EMBL" id="CH408155">
    <property type="protein sequence ID" value="EDK36797.2"/>
    <property type="molecule type" value="Genomic_DNA"/>
</dbReference>
<dbReference type="RefSeq" id="XP_001487518.1">
    <property type="nucleotide sequence ID" value="XM_001487468.1"/>
</dbReference>
<dbReference type="FunCoup" id="A5DC90">
    <property type="interactions" value="65"/>
</dbReference>
<dbReference type="STRING" id="294746.A5DC90"/>
<dbReference type="ESTHER" id="picgu-atg15">
    <property type="family name" value="ATG15-related-lipase"/>
</dbReference>
<dbReference type="GlyCosmos" id="A5DC90">
    <property type="glycosylation" value="3 sites, No reported glycans"/>
</dbReference>
<dbReference type="GeneID" id="5128702"/>
<dbReference type="KEGG" id="pgu:PGUG_00895"/>
<dbReference type="eggNOG" id="KOG4540">
    <property type="taxonomic scope" value="Eukaryota"/>
</dbReference>
<dbReference type="HOGENOM" id="CLU_028295_0_2_1"/>
<dbReference type="InParanoid" id="A5DC90"/>
<dbReference type="OMA" id="TYHFGHT"/>
<dbReference type="OrthoDB" id="58570at2759"/>
<dbReference type="Proteomes" id="UP000001997">
    <property type="component" value="Unassembled WGS sequence"/>
</dbReference>
<dbReference type="GO" id="GO:0032585">
    <property type="term" value="C:multivesicular body membrane"/>
    <property type="evidence" value="ECO:0007669"/>
    <property type="project" value="UniProtKB-SubCell"/>
</dbReference>
<dbReference type="GO" id="GO:0005775">
    <property type="term" value="C:vacuolar lumen"/>
    <property type="evidence" value="ECO:0007669"/>
    <property type="project" value="TreeGrafter"/>
</dbReference>
<dbReference type="GO" id="GO:0004620">
    <property type="term" value="F:phospholipase activity"/>
    <property type="evidence" value="ECO:0007669"/>
    <property type="project" value="TreeGrafter"/>
</dbReference>
<dbReference type="GO" id="GO:0004806">
    <property type="term" value="F:triacylglycerol lipase activity"/>
    <property type="evidence" value="ECO:0007669"/>
    <property type="project" value="UniProtKB-EC"/>
</dbReference>
<dbReference type="GO" id="GO:0034496">
    <property type="term" value="P:multivesicular body membrane disassembly"/>
    <property type="evidence" value="ECO:0007669"/>
    <property type="project" value="TreeGrafter"/>
</dbReference>
<dbReference type="GO" id="GO:0046461">
    <property type="term" value="P:neutral lipid catabolic process"/>
    <property type="evidence" value="ECO:0007669"/>
    <property type="project" value="TreeGrafter"/>
</dbReference>
<dbReference type="GO" id="GO:0006660">
    <property type="term" value="P:phosphatidylserine catabolic process"/>
    <property type="evidence" value="ECO:0007669"/>
    <property type="project" value="TreeGrafter"/>
</dbReference>
<dbReference type="GO" id="GO:0034727">
    <property type="term" value="P:piecemeal microautophagy of the nucleus"/>
    <property type="evidence" value="ECO:0007669"/>
    <property type="project" value="TreeGrafter"/>
</dbReference>
<dbReference type="CDD" id="cd00519">
    <property type="entry name" value="Lipase_3"/>
    <property type="match status" value="1"/>
</dbReference>
<dbReference type="Gene3D" id="3.40.50.1820">
    <property type="entry name" value="alpha/beta hydrolase"/>
    <property type="match status" value="1"/>
</dbReference>
<dbReference type="InterPro" id="IPR029058">
    <property type="entry name" value="AB_hydrolase_fold"/>
</dbReference>
<dbReference type="InterPro" id="IPR050805">
    <property type="entry name" value="ATG15_Lipase"/>
</dbReference>
<dbReference type="InterPro" id="IPR002921">
    <property type="entry name" value="Fungal_lipase-type"/>
</dbReference>
<dbReference type="PANTHER" id="PTHR47175">
    <property type="entry name" value="LIPASE ATG15-RELATED"/>
    <property type="match status" value="1"/>
</dbReference>
<dbReference type="PANTHER" id="PTHR47175:SF2">
    <property type="entry name" value="LIPASE ATG15-RELATED"/>
    <property type="match status" value="1"/>
</dbReference>
<dbReference type="Pfam" id="PF01764">
    <property type="entry name" value="Lipase_3"/>
    <property type="match status" value="1"/>
</dbReference>
<dbReference type="SUPFAM" id="SSF53474">
    <property type="entry name" value="alpha/beta-Hydrolases"/>
    <property type="match status" value="1"/>
</dbReference>
<dbReference type="PROSITE" id="PS00120">
    <property type="entry name" value="LIPASE_SER"/>
    <property type="match status" value="1"/>
</dbReference>
<name>ATG15_PICGU</name>
<evidence type="ECO:0000250" key="1"/>
<evidence type="ECO:0000250" key="2">
    <source>
        <dbReference type="UniProtKB" id="P25641"/>
    </source>
</evidence>
<evidence type="ECO:0000255" key="3"/>
<evidence type="ECO:0000255" key="4">
    <source>
        <dbReference type="PROSITE-ProRule" id="PRU10037"/>
    </source>
</evidence>
<evidence type="ECO:0000256" key="5">
    <source>
        <dbReference type="SAM" id="MobiDB-lite"/>
    </source>
</evidence>
<evidence type="ECO:0000305" key="6"/>